<reference key="1">
    <citation type="journal article" date="1998" name="Science">
        <title>Genome sequence of the nematode C. elegans: a platform for investigating biology.</title>
        <authorList>
            <consortium name="The C. elegans sequencing consortium"/>
        </authorList>
    </citation>
    <scope>NUCLEOTIDE SEQUENCE [LARGE SCALE GENOMIC DNA]</scope>
    <source>
        <strain>Bristol N2</strain>
    </source>
</reference>
<sequence>MEENPLQCTICKNEFEEPILLSCQHTTCRKCSTGSPSCKSCSPIPSTSRSHTPHPDKLAAFLLDASKEEMEECANCEQISLPMFYCETCQQSLCLVCRNVTHQARMFSSHKIISSDERSKVYSSSLCKDHNEPYILYCSDVRKLVCIQCFNGRPLEERHSFISIEQGHRLCLERIEQSAAKLRFYQSERQEELNVRQRVLDENASNFDDARASLYQLCQQIIDTVMTTRETLAKELVKQQEQSDEQCKRQIKEIEAVMGPVRLCLFSAQILCTTASKLDVLQLCPQLQKRIGVLLDKTIDKLPVSSTPDSIEVRSDLAKALEPFLGMSAAWCPISVSREGSSSNSYKRGSGSHKAISMLSKFQATIDLAGAFGELFGKVEHPLRQLVTALSSTSQQVLETQRDLTIRRCIIEKEDVEKLVKTCKKIEAGLGMHSAALDGMQSEMQEIWQEQLDRVRRQQIIYREKVEEILNLRETARQILTAAKQLVPYVSCILNMNAMIDPKRCHPPDPAPMESICLEITGIEPNSQNRILAIEKEEENRRLNQEAKKKEELAGQSAVMKTLKHGKIKRKEMNRMMLNTNRERSPGGTDTALTSPCIRRLTTALKEETASELDAEEFLDEIFELSGEQYDEVVDGTLTEEDRCSSALLLSMEISSDSISPLPSLEQLLGRIPLASRVTSNIGFSRGAMLQSLNDVFALQKPPTPENISVSEERNVLASAVRNAEKRKSGAGLPTNSDKDEVIEKEEIEKETEKEKKKVIRRRVKKVSEPSEEEVTTFTFNAPPDCPFVPQEIFESDEKLGTFEAKERVLQSLKQKMNQKTE</sequence>
<organism>
    <name type="scientific">Caenorhabditis elegans</name>
    <dbReference type="NCBI Taxonomy" id="6239"/>
    <lineage>
        <taxon>Eukaryota</taxon>
        <taxon>Metazoa</taxon>
        <taxon>Ecdysozoa</taxon>
        <taxon>Nematoda</taxon>
        <taxon>Chromadorea</taxon>
        <taxon>Rhabditida</taxon>
        <taxon>Rhabditina</taxon>
        <taxon>Rhabditomorpha</taxon>
        <taxon>Rhabditoidea</taxon>
        <taxon>Rhabditidae</taxon>
        <taxon>Peloderinae</taxon>
        <taxon>Caenorhabditis</taxon>
    </lineage>
</organism>
<dbReference type="EMBL" id="Z74035">
    <property type="protein sequence ID" value="CAA98481.2"/>
    <property type="molecule type" value="Genomic_DNA"/>
</dbReference>
<dbReference type="PIR" id="T22363">
    <property type="entry name" value="T22363"/>
</dbReference>
<dbReference type="RefSeq" id="NP_505876.2">
    <property type="nucleotide sequence ID" value="NM_073475.4"/>
</dbReference>
<dbReference type="BioGRID" id="44592">
    <property type="interactions" value="1"/>
</dbReference>
<dbReference type="FunCoup" id="Q20548">
    <property type="interactions" value="54"/>
</dbReference>
<dbReference type="IntAct" id="Q20548">
    <property type="interactions" value="2"/>
</dbReference>
<dbReference type="PaxDb" id="6239-F47G9.4.1"/>
<dbReference type="EnsemblMetazoa" id="F47G9.4.1">
    <property type="protein sequence ID" value="F47G9.4.1"/>
    <property type="gene ID" value="WBGene00009831"/>
</dbReference>
<dbReference type="GeneID" id="179566"/>
<dbReference type="KEGG" id="cel:CELE_F47G9.4"/>
<dbReference type="UCSC" id="F47G9.4">
    <property type="organism name" value="c. elegans"/>
</dbReference>
<dbReference type="AGR" id="WB:WBGene00009831"/>
<dbReference type="CTD" id="179566"/>
<dbReference type="WormBase" id="F47G9.4">
    <property type="protein sequence ID" value="CE43062"/>
    <property type="gene ID" value="WBGene00009831"/>
</dbReference>
<dbReference type="eggNOG" id="KOG2177">
    <property type="taxonomic scope" value="Eukaryota"/>
</dbReference>
<dbReference type="GeneTree" id="ENSGT00510000048612"/>
<dbReference type="HOGENOM" id="CLU_018894_0_0_1"/>
<dbReference type="InParanoid" id="Q20548"/>
<dbReference type="OMA" id="YEDSYRH"/>
<dbReference type="OrthoDB" id="9049620at2759"/>
<dbReference type="PhylomeDB" id="Q20548"/>
<dbReference type="PRO" id="PR:Q20548"/>
<dbReference type="Proteomes" id="UP000001940">
    <property type="component" value="Chromosome V"/>
</dbReference>
<dbReference type="Bgee" id="WBGene00009831">
    <property type="expression patterns" value="Expressed in pharyngeal muscle cell (C elegans) and 3 other cell types or tissues"/>
</dbReference>
<dbReference type="GO" id="GO:0048471">
    <property type="term" value="C:perinuclear region of cytoplasm"/>
    <property type="evidence" value="ECO:0000318"/>
    <property type="project" value="GO_Central"/>
</dbReference>
<dbReference type="GO" id="GO:0030544">
    <property type="term" value="F:Hsp70 protein binding"/>
    <property type="evidence" value="ECO:0000318"/>
    <property type="project" value="GO_Central"/>
</dbReference>
<dbReference type="GO" id="GO:0044325">
    <property type="term" value="F:transmembrane transporter binding"/>
    <property type="evidence" value="ECO:0000318"/>
    <property type="project" value="GO_Central"/>
</dbReference>
<dbReference type="GO" id="GO:0008270">
    <property type="term" value="F:zinc ion binding"/>
    <property type="evidence" value="ECO:0007669"/>
    <property type="project" value="UniProtKB-KW"/>
</dbReference>
<dbReference type="CDD" id="cd19814">
    <property type="entry name" value="Bbox1_RNF207-like"/>
    <property type="match status" value="1"/>
</dbReference>
<dbReference type="CDD" id="cd16449">
    <property type="entry name" value="RING-HC"/>
    <property type="match status" value="1"/>
</dbReference>
<dbReference type="Gene3D" id="1.20.58.1540">
    <property type="entry name" value="Actin interacting protein 3, C-terminal domain"/>
    <property type="match status" value="1"/>
</dbReference>
<dbReference type="Gene3D" id="3.30.160.60">
    <property type="entry name" value="Classic Zinc Finger"/>
    <property type="match status" value="1"/>
</dbReference>
<dbReference type="Gene3D" id="3.30.40.10">
    <property type="entry name" value="Zinc/RING finger domain, C3HC4 (zinc finger)"/>
    <property type="match status" value="1"/>
</dbReference>
<dbReference type="InterPro" id="IPR039320">
    <property type="entry name" value="RNF207"/>
</dbReference>
<dbReference type="InterPro" id="IPR000315">
    <property type="entry name" value="Znf_B-box"/>
</dbReference>
<dbReference type="InterPro" id="IPR001841">
    <property type="entry name" value="Znf_RING"/>
</dbReference>
<dbReference type="InterPro" id="IPR013083">
    <property type="entry name" value="Znf_RING/FYVE/PHD"/>
</dbReference>
<dbReference type="PANTHER" id="PTHR22635">
    <property type="entry name" value="RING FINGER PROTEIN 207"/>
    <property type="match status" value="1"/>
</dbReference>
<dbReference type="PANTHER" id="PTHR22635:SF0">
    <property type="entry name" value="RING FINGER PROTEIN 207"/>
    <property type="match status" value="1"/>
</dbReference>
<dbReference type="Pfam" id="PF00643">
    <property type="entry name" value="zf-B_box"/>
    <property type="match status" value="1"/>
</dbReference>
<dbReference type="SMART" id="SM00336">
    <property type="entry name" value="BBOX"/>
    <property type="match status" value="2"/>
</dbReference>
<dbReference type="SMART" id="SM00184">
    <property type="entry name" value="RING"/>
    <property type="match status" value="1"/>
</dbReference>
<dbReference type="SUPFAM" id="SSF57845">
    <property type="entry name" value="B-box zinc-binding domain"/>
    <property type="match status" value="1"/>
</dbReference>
<dbReference type="SUPFAM" id="SSF57850">
    <property type="entry name" value="RING/U-box"/>
    <property type="match status" value="1"/>
</dbReference>
<dbReference type="PROSITE" id="PS50119">
    <property type="entry name" value="ZF_BBOX"/>
    <property type="match status" value="1"/>
</dbReference>
<dbReference type="PROSITE" id="PS50089">
    <property type="entry name" value="ZF_RING_2"/>
    <property type="match status" value="1"/>
</dbReference>
<evidence type="ECO:0000255" key="1"/>
<evidence type="ECO:0000255" key="2">
    <source>
        <dbReference type="PROSITE-ProRule" id="PRU00024"/>
    </source>
</evidence>
<evidence type="ECO:0000255" key="3">
    <source>
        <dbReference type="PROSITE-ProRule" id="PRU00175"/>
    </source>
</evidence>
<feature type="chain" id="PRO_0000306263" description="Probable RING finger protein 207 homolog">
    <location>
        <begin position="1"/>
        <end position="822"/>
    </location>
</feature>
<feature type="zinc finger region" description="RING-type" evidence="3">
    <location>
        <begin position="8"/>
        <end position="42"/>
    </location>
</feature>
<feature type="zinc finger region" description="B box-type 1; atypical" evidence="2">
    <location>
        <begin position="68"/>
        <end position="115"/>
    </location>
</feature>
<feature type="zinc finger region" description="B box-type 2; degenerate" evidence="2">
    <location>
        <begin position="122"/>
        <end position="164"/>
    </location>
</feature>
<feature type="coiled-coil region" evidence="1">
    <location>
        <begin position="526"/>
        <end position="558"/>
    </location>
</feature>
<feature type="coiled-coil region" evidence="1">
    <location>
        <begin position="738"/>
        <end position="769"/>
    </location>
</feature>
<feature type="binding site" evidence="2">
    <location>
        <position position="73"/>
    </location>
    <ligand>
        <name>Zn(2+)</name>
        <dbReference type="ChEBI" id="CHEBI:29105"/>
    </ligand>
</feature>
<feature type="binding site" evidence="2">
    <location>
        <position position="76"/>
    </location>
    <ligand>
        <name>Zn(2+)</name>
        <dbReference type="ChEBI" id="CHEBI:29105"/>
    </ligand>
</feature>
<feature type="binding site" evidence="2">
    <location>
        <position position="97"/>
    </location>
    <ligand>
        <name>Zn(2+)</name>
        <dbReference type="ChEBI" id="CHEBI:29105"/>
    </ligand>
</feature>
<feature type="binding site" evidence="2">
    <location>
        <position position="102"/>
    </location>
    <ligand>
        <name>Zn(2+)</name>
        <dbReference type="ChEBI" id="CHEBI:29105"/>
    </ligand>
</feature>
<protein>
    <recommendedName>
        <fullName>Probable RING finger protein 207 homolog</fullName>
    </recommendedName>
</protein>
<name>RN207_CAEEL</name>
<accession>Q20548</accession>
<keyword id="KW-0175">Coiled coil</keyword>
<keyword id="KW-0479">Metal-binding</keyword>
<keyword id="KW-1185">Reference proteome</keyword>
<keyword id="KW-0677">Repeat</keyword>
<keyword id="KW-0862">Zinc</keyword>
<keyword id="KW-0863">Zinc-finger</keyword>
<gene>
    <name type="ORF">F47G9.4</name>
</gene>
<proteinExistence type="predicted"/>